<dbReference type="EMBL" id="AAFI02000164">
    <property type="protein sequence ID" value="EAL62154.1"/>
    <property type="molecule type" value="Genomic_DNA"/>
</dbReference>
<dbReference type="RefSeq" id="XP_635674.1">
    <property type="nucleotide sequence ID" value="XM_630582.1"/>
</dbReference>
<dbReference type="FunCoup" id="Q54FU3">
    <property type="interactions" value="131"/>
</dbReference>
<dbReference type="STRING" id="44689.Q54FU3"/>
<dbReference type="PaxDb" id="44689-DDB0188975"/>
<dbReference type="EnsemblProtists" id="EAL62154">
    <property type="protein sequence ID" value="EAL62154"/>
    <property type="gene ID" value="DDB_G0290587"/>
</dbReference>
<dbReference type="GeneID" id="8627745"/>
<dbReference type="KEGG" id="ddi:DDB_G0290587"/>
<dbReference type="dictyBase" id="DDB_G0290587"/>
<dbReference type="VEuPathDB" id="AmoebaDB:DDB_G0290587"/>
<dbReference type="eggNOG" id="ENOG502RSQS">
    <property type="taxonomic scope" value="Eukaryota"/>
</dbReference>
<dbReference type="HOGENOM" id="CLU_378765_0_0_1"/>
<dbReference type="InParanoid" id="Q54FU3"/>
<dbReference type="OMA" id="MMMQGIF"/>
<dbReference type="PRO" id="PR:Q54FU3"/>
<dbReference type="Proteomes" id="UP000002195">
    <property type="component" value="Chromosome 5"/>
</dbReference>
<accession>Q54FU3</accession>
<reference key="1">
    <citation type="journal article" date="2005" name="Nature">
        <title>The genome of the social amoeba Dictyostelium discoideum.</title>
        <authorList>
            <person name="Eichinger L."/>
            <person name="Pachebat J.A."/>
            <person name="Gloeckner G."/>
            <person name="Rajandream M.A."/>
            <person name="Sucgang R."/>
            <person name="Berriman M."/>
            <person name="Song J."/>
            <person name="Olsen R."/>
            <person name="Szafranski K."/>
            <person name="Xu Q."/>
            <person name="Tunggal B."/>
            <person name="Kummerfeld S."/>
            <person name="Madera M."/>
            <person name="Konfortov B.A."/>
            <person name="Rivero F."/>
            <person name="Bankier A.T."/>
            <person name="Lehmann R."/>
            <person name="Hamlin N."/>
            <person name="Davies R."/>
            <person name="Gaudet P."/>
            <person name="Fey P."/>
            <person name="Pilcher K."/>
            <person name="Chen G."/>
            <person name="Saunders D."/>
            <person name="Sodergren E.J."/>
            <person name="Davis P."/>
            <person name="Kerhornou A."/>
            <person name="Nie X."/>
            <person name="Hall N."/>
            <person name="Anjard C."/>
            <person name="Hemphill L."/>
            <person name="Bason N."/>
            <person name="Farbrother P."/>
            <person name="Desany B."/>
            <person name="Just E."/>
            <person name="Morio T."/>
            <person name="Rost R."/>
            <person name="Churcher C.M."/>
            <person name="Cooper J."/>
            <person name="Haydock S."/>
            <person name="van Driessche N."/>
            <person name="Cronin A."/>
            <person name="Goodhead I."/>
            <person name="Muzny D.M."/>
            <person name="Mourier T."/>
            <person name="Pain A."/>
            <person name="Lu M."/>
            <person name="Harper D."/>
            <person name="Lindsay R."/>
            <person name="Hauser H."/>
            <person name="James K.D."/>
            <person name="Quiles M."/>
            <person name="Madan Babu M."/>
            <person name="Saito T."/>
            <person name="Buchrieser C."/>
            <person name="Wardroper A."/>
            <person name="Felder M."/>
            <person name="Thangavelu M."/>
            <person name="Johnson D."/>
            <person name="Knights A."/>
            <person name="Loulseged H."/>
            <person name="Mungall K.L."/>
            <person name="Oliver K."/>
            <person name="Price C."/>
            <person name="Quail M.A."/>
            <person name="Urushihara H."/>
            <person name="Hernandez J."/>
            <person name="Rabbinowitsch E."/>
            <person name="Steffen D."/>
            <person name="Sanders M."/>
            <person name="Ma J."/>
            <person name="Kohara Y."/>
            <person name="Sharp S."/>
            <person name="Simmonds M.N."/>
            <person name="Spiegler S."/>
            <person name="Tivey A."/>
            <person name="Sugano S."/>
            <person name="White B."/>
            <person name="Walker D."/>
            <person name="Woodward J.R."/>
            <person name="Winckler T."/>
            <person name="Tanaka Y."/>
            <person name="Shaulsky G."/>
            <person name="Schleicher M."/>
            <person name="Weinstock G.M."/>
            <person name="Rosenthal A."/>
            <person name="Cox E.C."/>
            <person name="Chisholm R.L."/>
            <person name="Gibbs R.A."/>
            <person name="Loomis W.F."/>
            <person name="Platzer M."/>
            <person name="Kay R.R."/>
            <person name="Williams J.G."/>
            <person name="Dear P.H."/>
            <person name="Noegel A.A."/>
            <person name="Barrell B.G."/>
            <person name="Kuspa A."/>
        </authorList>
    </citation>
    <scope>NUCLEOTIDE SEQUENCE [LARGE SCALE GENOMIC DNA]</scope>
    <source>
        <strain>AX4</strain>
    </source>
</reference>
<feature type="chain" id="PRO_0000346908" description="Uncharacterized protein DDB_G0290587">
    <location>
        <begin position="1"/>
        <end position="732"/>
    </location>
</feature>
<feature type="region of interest" description="Disordered" evidence="1">
    <location>
        <begin position="38"/>
        <end position="90"/>
    </location>
</feature>
<feature type="region of interest" description="Disordered" evidence="1">
    <location>
        <begin position="226"/>
        <end position="629"/>
    </location>
</feature>
<feature type="compositionally biased region" description="Low complexity" evidence="1">
    <location>
        <begin position="47"/>
        <end position="56"/>
    </location>
</feature>
<feature type="compositionally biased region" description="Polar residues" evidence="1">
    <location>
        <begin position="57"/>
        <end position="76"/>
    </location>
</feature>
<feature type="compositionally biased region" description="Low complexity" evidence="1">
    <location>
        <begin position="77"/>
        <end position="89"/>
    </location>
</feature>
<feature type="compositionally biased region" description="Low complexity" evidence="1">
    <location>
        <begin position="231"/>
        <end position="247"/>
    </location>
</feature>
<feature type="compositionally biased region" description="Low complexity" evidence="1">
    <location>
        <begin position="254"/>
        <end position="318"/>
    </location>
</feature>
<feature type="compositionally biased region" description="Basic residues" evidence="1">
    <location>
        <begin position="327"/>
        <end position="338"/>
    </location>
</feature>
<feature type="compositionally biased region" description="Low complexity" evidence="1">
    <location>
        <begin position="339"/>
        <end position="383"/>
    </location>
</feature>
<feature type="compositionally biased region" description="Low complexity" evidence="1">
    <location>
        <begin position="401"/>
        <end position="421"/>
    </location>
</feature>
<feature type="compositionally biased region" description="Low complexity" evidence="1">
    <location>
        <begin position="487"/>
        <end position="523"/>
    </location>
</feature>
<feature type="compositionally biased region" description="Acidic residues" evidence="1">
    <location>
        <begin position="553"/>
        <end position="566"/>
    </location>
</feature>
<feature type="compositionally biased region" description="Low complexity" evidence="1">
    <location>
        <begin position="567"/>
        <end position="577"/>
    </location>
</feature>
<feature type="compositionally biased region" description="Low complexity" evidence="1">
    <location>
        <begin position="593"/>
        <end position="609"/>
    </location>
</feature>
<feature type="compositionally biased region" description="Acidic residues" evidence="1">
    <location>
        <begin position="610"/>
        <end position="621"/>
    </location>
</feature>
<protein>
    <recommendedName>
        <fullName>Uncharacterized protein DDB_G0290587</fullName>
    </recommendedName>
</protein>
<gene>
    <name type="ORF">DDB_G0290587</name>
</gene>
<proteinExistence type="predicted"/>
<sequence length="732" mass="79386">MSESAVPADIIMQPFAKLSEESLKLAVESLNELKIPNTTLASTTAEQQQQQQQQQQPPSSSTTKEGGATTTQDNKLTANGGTTADNNNNKPMVINKLDYLPIIKSNIWDESYGWLTTIPNSESFAQIIGTTIKEGKDIKKTLYILDPKQLKESFNLLGLDQQENSIDTNEMIYKIEEEMMMQGIFKILFKLDKKTLESFCRDLKIQIKDDMGALCDSIMSTMYDLEESPDTTTTAAATTTTTTTTAAVPPPPTTTTTTTTTTPTIASTPTVVPPTNTTTTTSTTSPIPSTTPLTNTTSIAAATTTTTTTPTDNSGTNSPNKETTPSKAKKGVPKKAPTKKQPATKSPTTETAGIVPTTTTTPPQATTTTTTTTPPTNIIAPKTNSTIISPPTEAPSKPAPKTSKSQATTTTTTTTVQSTTKNTEKSQNLTNTEQPKKKLRSSLDKPSSDKPLTPTLPGKRERKPLPLDPVHLQPEQKSKPGSGSAQSASTAKPTPTTTTTTTTTTKPKSTIAKTSTSTTIKSKPTTKKKETTKIITNGKRKRKQDNNNGNEEAAAEEQEEEEEEDNSNGIQNNNSSNDVEINSENESDREQNDNFSNFGSSNGNGNGLLSEDDDDDDDDDNNNNIMDYQSTASSEIKGYYTHDRKWICPSFDYIKKGIERGFLQNNFNLSDLLEYCKIHDLPKNKTKTKTIKIILDFVETGTAPQQTSKPKKLVGKAAAKKKLQDQQELASS</sequence>
<evidence type="ECO:0000256" key="1">
    <source>
        <dbReference type="SAM" id="MobiDB-lite"/>
    </source>
</evidence>
<name>Y8975_DICDI</name>
<keyword id="KW-1185">Reference proteome</keyword>
<organism>
    <name type="scientific">Dictyostelium discoideum</name>
    <name type="common">Social amoeba</name>
    <dbReference type="NCBI Taxonomy" id="44689"/>
    <lineage>
        <taxon>Eukaryota</taxon>
        <taxon>Amoebozoa</taxon>
        <taxon>Evosea</taxon>
        <taxon>Eumycetozoa</taxon>
        <taxon>Dictyostelia</taxon>
        <taxon>Dictyosteliales</taxon>
        <taxon>Dictyosteliaceae</taxon>
        <taxon>Dictyostelium</taxon>
    </lineage>
</organism>